<evidence type="ECO:0000250" key="1">
    <source>
        <dbReference type="UniProtKB" id="P05422"/>
    </source>
</evidence>
<evidence type="ECO:0000255" key="2"/>
<evidence type="ECO:0000269" key="3">
    <source ref="1"/>
</evidence>
<evidence type="ECO:0000303" key="4">
    <source ref="1"/>
</evidence>
<evidence type="ECO:0000305" key="5"/>
<keyword id="KW-0903">Direct protein sequencing</keyword>
<keyword id="KW-0257">Endorphin</keyword>
<keyword id="KW-0555">Opioid peptide</keyword>
<keyword id="KW-0964">Secreted</keyword>
<comment type="function">
    <text evidence="1">Has a very potent opiate-like activity. It has high affinity and selectivity for delta-type opioid receptors (By similarity).</text>
</comment>
<comment type="subcellular location">
    <subcellularLocation>
        <location evidence="3">Secreted</location>
    </subcellularLocation>
</comment>
<comment type="tissue specificity">
    <text evidence="3">Expressed by the skin glands.</text>
</comment>
<comment type="mass spectrometry"/>
<comment type="similarity">
    <text evidence="2">Belongs to the frog skin active peptide (FSAP) family. Dermorphin subfamily.</text>
</comment>
<organism>
    <name type="scientific">Phyllomedusa burmeisteri</name>
    <name type="common">Brazilian common walking leaf frog</name>
    <dbReference type="NCBI Taxonomy" id="39413"/>
    <lineage>
        <taxon>Eukaryota</taxon>
        <taxon>Metazoa</taxon>
        <taxon>Chordata</taxon>
        <taxon>Craniata</taxon>
        <taxon>Vertebrata</taxon>
        <taxon>Euteleostomi</taxon>
        <taxon>Amphibia</taxon>
        <taxon>Batrachia</taxon>
        <taxon>Anura</taxon>
        <taxon>Neobatrachia</taxon>
        <taxon>Hyloidea</taxon>
        <taxon>Hylidae</taxon>
        <taxon>Phyllomedusinae</taxon>
        <taxon>Phyllomedusa</taxon>
    </lineage>
</organism>
<protein>
    <recommendedName>
        <fullName evidence="4">Deltorphin-like peptide</fullName>
    </recommendedName>
</protein>
<accession>P86285</accession>
<sequence>YMFHLMN</sequence>
<name>DELT_PHYBU</name>
<reference evidence="5" key="1">
    <citation type="submission" date="2009-04" db="UniProtKB">
        <title>Identification of peptides from Phyllomedusa burmesteri skin secretomics by nano LC MS/MS.</title>
        <authorList>
            <person name="Conceicao K."/>
            <person name="Klitzke C.F."/>
            <person name="Brito R.C."/>
            <person name="Andrade D.F."/>
            <person name="Junca F.A."/>
            <person name="Biondi I."/>
            <person name="Lopes-Ferreira M."/>
        </authorList>
    </citation>
    <scope>PROTEIN SEQUENCE</scope>
    <scope>SUBCELLULAR LOCATION</scope>
    <scope>TISSUE SPECIFICITY</scope>
    <scope>MASS SPECTROMETRY</scope>
    <source>
        <tissue evidence="3">Skin secretion</tissue>
    </source>
</reference>
<feature type="peptide" id="PRO_0000378908" description="Deltorphin-like peptide" evidence="3">
    <location>
        <begin position="1"/>
        <end position="7"/>
    </location>
</feature>
<proteinExistence type="evidence at protein level"/>
<dbReference type="GO" id="GO:0005576">
    <property type="term" value="C:extracellular region"/>
    <property type="evidence" value="ECO:0007669"/>
    <property type="project" value="UniProtKB-SubCell"/>
</dbReference>
<dbReference type="GO" id="GO:0001515">
    <property type="term" value="F:opioid peptide activity"/>
    <property type="evidence" value="ECO:0007669"/>
    <property type="project" value="UniProtKB-KW"/>
</dbReference>
<dbReference type="GO" id="GO:0007218">
    <property type="term" value="P:neuropeptide signaling pathway"/>
    <property type="evidence" value="ECO:0007669"/>
    <property type="project" value="UniProtKB-KW"/>
</dbReference>